<reference key="1">
    <citation type="submission" date="2007-11" db="EMBL/GenBank/DDBJ databases">
        <title>Complete sequence of Petroga mobilis SJ95.</title>
        <authorList>
            <consortium name="US DOE Joint Genome Institute"/>
            <person name="Copeland A."/>
            <person name="Lucas S."/>
            <person name="Lapidus A."/>
            <person name="Barry K."/>
            <person name="Glavina del Rio T."/>
            <person name="Dalin E."/>
            <person name="Tice H."/>
            <person name="Pitluck S."/>
            <person name="Meincke L."/>
            <person name="Brettin T."/>
            <person name="Bruce D."/>
            <person name="Detter J.C."/>
            <person name="Han C."/>
            <person name="Kuske C.R."/>
            <person name="Schmutz J."/>
            <person name="Larimer F."/>
            <person name="Land M."/>
            <person name="Hauser L."/>
            <person name="Kyrpides N."/>
            <person name="Mikhailova N."/>
            <person name="Noll K."/>
            <person name="Richardson P."/>
        </authorList>
    </citation>
    <scope>NUCLEOTIDE SEQUENCE [LARGE SCALE GENOMIC DNA]</scope>
    <source>
        <strain>DSM 10674 / SJ95</strain>
    </source>
</reference>
<organism>
    <name type="scientific">Petrotoga mobilis (strain DSM 10674 / SJ95)</name>
    <dbReference type="NCBI Taxonomy" id="403833"/>
    <lineage>
        <taxon>Bacteria</taxon>
        <taxon>Thermotogati</taxon>
        <taxon>Thermotogota</taxon>
        <taxon>Thermotogae</taxon>
        <taxon>Petrotogales</taxon>
        <taxon>Petrotogaceae</taxon>
        <taxon>Petrotoga</taxon>
    </lineage>
</organism>
<feature type="chain" id="PRO_1000087184" description="Large ribosomal subunit protein bL17">
    <location>
        <begin position="1"/>
        <end position="128"/>
    </location>
</feature>
<accession>A9BFY9</accession>
<comment type="subunit">
    <text evidence="1">Part of the 50S ribosomal subunit. Contacts protein L32.</text>
</comment>
<comment type="similarity">
    <text evidence="1">Belongs to the bacterial ribosomal protein bL17 family.</text>
</comment>
<gene>
    <name evidence="1" type="primary">rplQ</name>
    <name type="ordered locus">Pmob_0761</name>
</gene>
<dbReference type="EMBL" id="CP000879">
    <property type="protein sequence ID" value="ABX31485.1"/>
    <property type="molecule type" value="Genomic_DNA"/>
</dbReference>
<dbReference type="RefSeq" id="WP_012208588.1">
    <property type="nucleotide sequence ID" value="NC_010003.1"/>
</dbReference>
<dbReference type="SMR" id="A9BFY9"/>
<dbReference type="STRING" id="403833.Pmob_0761"/>
<dbReference type="KEGG" id="pmo:Pmob_0761"/>
<dbReference type="eggNOG" id="COG0203">
    <property type="taxonomic scope" value="Bacteria"/>
</dbReference>
<dbReference type="HOGENOM" id="CLU_074407_2_0_0"/>
<dbReference type="OrthoDB" id="9809073at2"/>
<dbReference type="Proteomes" id="UP000000789">
    <property type="component" value="Chromosome"/>
</dbReference>
<dbReference type="GO" id="GO:0022625">
    <property type="term" value="C:cytosolic large ribosomal subunit"/>
    <property type="evidence" value="ECO:0007669"/>
    <property type="project" value="TreeGrafter"/>
</dbReference>
<dbReference type="GO" id="GO:0003735">
    <property type="term" value="F:structural constituent of ribosome"/>
    <property type="evidence" value="ECO:0007669"/>
    <property type="project" value="InterPro"/>
</dbReference>
<dbReference type="GO" id="GO:0006412">
    <property type="term" value="P:translation"/>
    <property type="evidence" value="ECO:0007669"/>
    <property type="project" value="UniProtKB-UniRule"/>
</dbReference>
<dbReference type="Gene3D" id="3.90.1030.10">
    <property type="entry name" value="Ribosomal protein L17"/>
    <property type="match status" value="1"/>
</dbReference>
<dbReference type="HAMAP" id="MF_01368">
    <property type="entry name" value="Ribosomal_bL17"/>
    <property type="match status" value="1"/>
</dbReference>
<dbReference type="InterPro" id="IPR000456">
    <property type="entry name" value="Ribosomal_bL17"/>
</dbReference>
<dbReference type="InterPro" id="IPR047859">
    <property type="entry name" value="Ribosomal_bL17_CS"/>
</dbReference>
<dbReference type="InterPro" id="IPR036373">
    <property type="entry name" value="Ribosomal_bL17_sf"/>
</dbReference>
<dbReference type="NCBIfam" id="TIGR00059">
    <property type="entry name" value="L17"/>
    <property type="match status" value="1"/>
</dbReference>
<dbReference type="PANTHER" id="PTHR14413:SF16">
    <property type="entry name" value="LARGE RIBOSOMAL SUBUNIT PROTEIN BL17M"/>
    <property type="match status" value="1"/>
</dbReference>
<dbReference type="PANTHER" id="PTHR14413">
    <property type="entry name" value="RIBOSOMAL PROTEIN L17"/>
    <property type="match status" value="1"/>
</dbReference>
<dbReference type="Pfam" id="PF01196">
    <property type="entry name" value="Ribosomal_L17"/>
    <property type="match status" value="1"/>
</dbReference>
<dbReference type="SUPFAM" id="SSF64263">
    <property type="entry name" value="Prokaryotic ribosomal protein L17"/>
    <property type="match status" value="1"/>
</dbReference>
<dbReference type="PROSITE" id="PS01167">
    <property type="entry name" value="RIBOSOMAL_L17"/>
    <property type="match status" value="1"/>
</dbReference>
<name>RL17_PETMO</name>
<protein>
    <recommendedName>
        <fullName evidence="1">Large ribosomal subunit protein bL17</fullName>
    </recommendedName>
    <alternativeName>
        <fullName evidence="2">50S ribosomal protein L17</fullName>
    </alternativeName>
</protein>
<sequence>MRHRVKTKKLNRYASHRKALLNNLARSVFESESIITTTAKAKAVRPLVERIITKAKEANSTDLPERRVALNRDINKHFNDRKLVYKIVHEIAPRYENRNGGYTRILKIGYRKGDASELSILQLLPKEE</sequence>
<proteinExistence type="inferred from homology"/>
<keyword id="KW-0687">Ribonucleoprotein</keyword>
<keyword id="KW-0689">Ribosomal protein</keyword>
<evidence type="ECO:0000255" key="1">
    <source>
        <dbReference type="HAMAP-Rule" id="MF_01368"/>
    </source>
</evidence>
<evidence type="ECO:0000305" key="2"/>